<reference key="1">
    <citation type="submission" date="2006-03" db="EMBL/GenBank/DDBJ databases">
        <title>Complete sequence of Shewanella denitrificans OS217.</title>
        <authorList>
            <consortium name="US DOE Joint Genome Institute"/>
            <person name="Copeland A."/>
            <person name="Lucas S."/>
            <person name="Lapidus A."/>
            <person name="Barry K."/>
            <person name="Detter J.C."/>
            <person name="Glavina del Rio T."/>
            <person name="Hammon N."/>
            <person name="Israni S."/>
            <person name="Dalin E."/>
            <person name="Tice H."/>
            <person name="Pitluck S."/>
            <person name="Brettin T."/>
            <person name="Bruce D."/>
            <person name="Han C."/>
            <person name="Tapia R."/>
            <person name="Gilna P."/>
            <person name="Kiss H."/>
            <person name="Schmutz J."/>
            <person name="Larimer F."/>
            <person name="Land M."/>
            <person name="Hauser L."/>
            <person name="Kyrpides N."/>
            <person name="Lykidis A."/>
            <person name="Richardson P."/>
        </authorList>
    </citation>
    <scope>NUCLEOTIDE SEQUENCE [LARGE SCALE GENOMIC DNA]</scope>
    <source>
        <strain>OS217 / ATCC BAA-1090 / DSM 15013</strain>
    </source>
</reference>
<evidence type="ECO:0000255" key="1">
    <source>
        <dbReference type="HAMAP-Rule" id="MF_00102"/>
    </source>
</evidence>
<evidence type="ECO:0000305" key="2"/>
<feature type="chain" id="PRO_1000008634" description="4-hydroxy-tetrahydrodipicolinate reductase">
    <location>
        <begin position="1"/>
        <end position="270"/>
    </location>
</feature>
<feature type="active site" description="Proton donor/acceptor" evidence="1">
    <location>
        <position position="158"/>
    </location>
</feature>
<feature type="active site" description="Proton donor" evidence="1">
    <location>
        <position position="162"/>
    </location>
</feature>
<feature type="binding site" evidence="1">
    <location>
        <begin position="11"/>
        <end position="16"/>
    </location>
    <ligand>
        <name>NAD(+)</name>
        <dbReference type="ChEBI" id="CHEBI:57540"/>
    </ligand>
</feature>
<feature type="binding site" evidence="1">
    <location>
        <position position="37"/>
    </location>
    <ligand>
        <name>NAD(+)</name>
        <dbReference type="ChEBI" id="CHEBI:57540"/>
    </ligand>
</feature>
<feature type="binding site" evidence="1">
    <location>
        <position position="38"/>
    </location>
    <ligand>
        <name>NADP(+)</name>
        <dbReference type="ChEBI" id="CHEBI:58349"/>
    </ligand>
</feature>
<feature type="binding site" evidence="1">
    <location>
        <begin position="101"/>
        <end position="103"/>
    </location>
    <ligand>
        <name>NAD(+)</name>
        <dbReference type="ChEBI" id="CHEBI:57540"/>
    </ligand>
</feature>
<feature type="binding site" evidence="1">
    <location>
        <begin position="125"/>
        <end position="128"/>
    </location>
    <ligand>
        <name>NAD(+)</name>
        <dbReference type="ChEBI" id="CHEBI:57540"/>
    </ligand>
</feature>
<feature type="binding site" evidence="1">
    <location>
        <position position="159"/>
    </location>
    <ligand>
        <name>(S)-2,3,4,5-tetrahydrodipicolinate</name>
        <dbReference type="ChEBI" id="CHEBI:16845"/>
    </ligand>
</feature>
<feature type="binding site" evidence="1">
    <location>
        <begin position="168"/>
        <end position="169"/>
    </location>
    <ligand>
        <name>(S)-2,3,4,5-tetrahydrodipicolinate</name>
        <dbReference type="ChEBI" id="CHEBI:16845"/>
    </ligand>
</feature>
<proteinExistence type="inferred from homology"/>
<comment type="function">
    <text evidence="1">Catalyzes the conversion of 4-hydroxy-tetrahydrodipicolinate (HTPA) to tetrahydrodipicolinate.</text>
</comment>
<comment type="catalytic activity">
    <reaction evidence="1">
        <text>(S)-2,3,4,5-tetrahydrodipicolinate + NAD(+) + H2O = (2S,4S)-4-hydroxy-2,3,4,5-tetrahydrodipicolinate + NADH + H(+)</text>
        <dbReference type="Rhea" id="RHEA:35323"/>
        <dbReference type="ChEBI" id="CHEBI:15377"/>
        <dbReference type="ChEBI" id="CHEBI:15378"/>
        <dbReference type="ChEBI" id="CHEBI:16845"/>
        <dbReference type="ChEBI" id="CHEBI:57540"/>
        <dbReference type="ChEBI" id="CHEBI:57945"/>
        <dbReference type="ChEBI" id="CHEBI:67139"/>
        <dbReference type="EC" id="1.17.1.8"/>
    </reaction>
</comment>
<comment type="catalytic activity">
    <reaction evidence="1">
        <text>(S)-2,3,4,5-tetrahydrodipicolinate + NADP(+) + H2O = (2S,4S)-4-hydroxy-2,3,4,5-tetrahydrodipicolinate + NADPH + H(+)</text>
        <dbReference type="Rhea" id="RHEA:35331"/>
        <dbReference type="ChEBI" id="CHEBI:15377"/>
        <dbReference type="ChEBI" id="CHEBI:15378"/>
        <dbReference type="ChEBI" id="CHEBI:16845"/>
        <dbReference type="ChEBI" id="CHEBI:57783"/>
        <dbReference type="ChEBI" id="CHEBI:58349"/>
        <dbReference type="ChEBI" id="CHEBI:67139"/>
        <dbReference type="EC" id="1.17.1.8"/>
    </reaction>
</comment>
<comment type="pathway">
    <text evidence="1">Amino-acid biosynthesis; L-lysine biosynthesis via DAP pathway; (S)-tetrahydrodipicolinate from L-aspartate: step 4/4.</text>
</comment>
<comment type="subcellular location">
    <subcellularLocation>
        <location evidence="1">Cytoplasm</location>
    </subcellularLocation>
</comment>
<comment type="similarity">
    <text evidence="1">Belongs to the DapB family.</text>
</comment>
<comment type="caution">
    <text evidence="2">Was originally thought to be a dihydrodipicolinate reductase (DHDPR), catalyzing the conversion of dihydrodipicolinate to tetrahydrodipicolinate. However, it was shown in E.coli that the substrate of the enzymatic reaction is not dihydrodipicolinate (DHDP) but in fact (2S,4S)-4-hydroxy-2,3,4,5-tetrahydrodipicolinic acid (HTPA), the product released by the DapA-catalyzed reaction.</text>
</comment>
<accession>Q12QJ4</accession>
<sequence>MTTKVRVAVVGASGRMGRVLIEAAKHQDVITLGAAIERQGSTLIGADAGELAGVGCVNVAICDSLDNVKDDFDVLIDFTSPDASMLHLEWCLRHKKPMVIGTTGFNHAQKEQISACAEQIPVVFSPNMSVGVNLMWKLLEVATAVMGQDTDIEIIEAHHRHKKDAPSGTALKMGEIIANTLGRDLEECAVYGREGITGARDRNTIGFSTIRAGDIVGEHTAMFADIGERIEITHKASSRMTYANGAMRAAFWLYDQNAGLYDMQQVLGLS</sequence>
<organism>
    <name type="scientific">Shewanella denitrificans (strain OS217 / ATCC BAA-1090 / DSM 15013)</name>
    <dbReference type="NCBI Taxonomy" id="318161"/>
    <lineage>
        <taxon>Bacteria</taxon>
        <taxon>Pseudomonadati</taxon>
        <taxon>Pseudomonadota</taxon>
        <taxon>Gammaproteobacteria</taxon>
        <taxon>Alteromonadales</taxon>
        <taxon>Shewanellaceae</taxon>
        <taxon>Shewanella</taxon>
    </lineage>
</organism>
<dbReference type="EC" id="1.17.1.8" evidence="1"/>
<dbReference type="EMBL" id="CP000302">
    <property type="protein sequence ID" value="ABE54282.1"/>
    <property type="molecule type" value="Genomic_DNA"/>
</dbReference>
<dbReference type="RefSeq" id="WP_011495446.1">
    <property type="nucleotide sequence ID" value="NC_007954.1"/>
</dbReference>
<dbReference type="SMR" id="Q12QJ4"/>
<dbReference type="STRING" id="318161.Sden_0994"/>
<dbReference type="KEGG" id="sdn:Sden_0994"/>
<dbReference type="eggNOG" id="COG0289">
    <property type="taxonomic scope" value="Bacteria"/>
</dbReference>
<dbReference type="HOGENOM" id="CLU_047479_2_1_6"/>
<dbReference type="OrthoDB" id="9790352at2"/>
<dbReference type="UniPathway" id="UPA00034">
    <property type="reaction ID" value="UER00018"/>
</dbReference>
<dbReference type="Proteomes" id="UP000001982">
    <property type="component" value="Chromosome"/>
</dbReference>
<dbReference type="GO" id="GO:0005829">
    <property type="term" value="C:cytosol"/>
    <property type="evidence" value="ECO:0007669"/>
    <property type="project" value="TreeGrafter"/>
</dbReference>
<dbReference type="GO" id="GO:0008839">
    <property type="term" value="F:4-hydroxy-tetrahydrodipicolinate reductase"/>
    <property type="evidence" value="ECO:0007669"/>
    <property type="project" value="UniProtKB-EC"/>
</dbReference>
<dbReference type="GO" id="GO:0051287">
    <property type="term" value="F:NAD binding"/>
    <property type="evidence" value="ECO:0007669"/>
    <property type="project" value="UniProtKB-UniRule"/>
</dbReference>
<dbReference type="GO" id="GO:0050661">
    <property type="term" value="F:NADP binding"/>
    <property type="evidence" value="ECO:0007669"/>
    <property type="project" value="UniProtKB-UniRule"/>
</dbReference>
<dbReference type="GO" id="GO:0016726">
    <property type="term" value="F:oxidoreductase activity, acting on CH or CH2 groups, NAD or NADP as acceptor"/>
    <property type="evidence" value="ECO:0007669"/>
    <property type="project" value="UniProtKB-UniRule"/>
</dbReference>
<dbReference type="GO" id="GO:0019877">
    <property type="term" value="P:diaminopimelate biosynthetic process"/>
    <property type="evidence" value="ECO:0007669"/>
    <property type="project" value="UniProtKB-UniRule"/>
</dbReference>
<dbReference type="GO" id="GO:0009089">
    <property type="term" value="P:lysine biosynthetic process via diaminopimelate"/>
    <property type="evidence" value="ECO:0007669"/>
    <property type="project" value="UniProtKB-UniRule"/>
</dbReference>
<dbReference type="CDD" id="cd02274">
    <property type="entry name" value="DHDPR_N"/>
    <property type="match status" value="1"/>
</dbReference>
<dbReference type="FunFam" id="3.30.360.10:FF:000004">
    <property type="entry name" value="4-hydroxy-tetrahydrodipicolinate reductase"/>
    <property type="match status" value="1"/>
</dbReference>
<dbReference type="FunFam" id="3.40.50.720:FF:000048">
    <property type="entry name" value="4-hydroxy-tetrahydrodipicolinate reductase"/>
    <property type="match status" value="1"/>
</dbReference>
<dbReference type="Gene3D" id="3.30.360.10">
    <property type="entry name" value="Dihydrodipicolinate Reductase, domain 2"/>
    <property type="match status" value="1"/>
</dbReference>
<dbReference type="Gene3D" id="3.40.50.720">
    <property type="entry name" value="NAD(P)-binding Rossmann-like Domain"/>
    <property type="match status" value="1"/>
</dbReference>
<dbReference type="HAMAP" id="MF_00102">
    <property type="entry name" value="DapB"/>
    <property type="match status" value="1"/>
</dbReference>
<dbReference type="InterPro" id="IPR022663">
    <property type="entry name" value="DapB_C"/>
</dbReference>
<dbReference type="InterPro" id="IPR000846">
    <property type="entry name" value="DapB_N"/>
</dbReference>
<dbReference type="InterPro" id="IPR022664">
    <property type="entry name" value="DapB_N_CS"/>
</dbReference>
<dbReference type="InterPro" id="IPR023940">
    <property type="entry name" value="DHDPR_bac"/>
</dbReference>
<dbReference type="InterPro" id="IPR036291">
    <property type="entry name" value="NAD(P)-bd_dom_sf"/>
</dbReference>
<dbReference type="NCBIfam" id="TIGR00036">
    <property type="entry name" value="dapB"/>
    <property type="match status" value="1"/>
</dbReference>
<dbReference type="PANTHER" id="PTHR20836:SF0">
    <property type="entry name" value="4-HYDROXY-TETRAHYDRODIPICOLINATE REDUCTASE 1, CHLOROPLASTIC-RELATED"/>
    <property type="match status" value="1"/>
</dbReference>
<dbReference type="PANTHER" id="PTHR20836">
    <property type="entry name" value="DIHYDRODIPICOLINATE REDUCTASE"/>
    <property type="match status" value="1"/>
</dbReference>
<dbReference type="Pfam" id="PF05173">
    <property type="entry name" value="DapB_C"/>
    <property type="match status" value="1"/>
</dbReference>
<dbReference type="Pfam" id="PF01113">
    <property type="entry name" value="DapB_N"/>
    <property type="match status" value="1"/>
</dbReference>
<dbReference type="PIRSF" id="PIRSF000161">
    <property type="entry name" value="DHPR"/>
    <property type="match status" value="1"/>
</dbReference>
<dbReference type="SUPFAM" id="SSF55347">
    <property type="entry name" value="Glyceraldehyde-3-phosphate dehydrogenase-like, C-terminal domain"/>
    <property type="match status" value="1"/>
</dbReference>
<dbReference type="SUPFAM" id="SSF51735">
    <property type="entry name" value="NAD(P)-binding Rossmann-fold domains"/>
    <property type="match status" value="1"/>
</dbReference>
<dbReference type="PROSITE" id="PS01298">
    <property type="entry name" value="DAPB"/>
    <property type="match status" value="1"/>
</dbReference>
<name>DAPB_SHEDO</name>
<protein>
    <recommendedName>
        <fullName evidence="1">4-hydroxy-tetrahydrodipicolinate reductase</fullName>
        <shortName evidence="1">HTPA reductase</shortName>
        <ecNumber evidence="1">1.17.1.8</ecNumber>
    </recommendedName>
</protein>
<keyword id="KW-0028">Amino-acid biosynthesis</keyword>
<keyword id="KW-0963">Cytoplasm</keyword>
<keyword id="KW-0220">Diaminopimelate biosynthesis</keyword>
<keyword id="KW-0457">Lysine biosynthesis</keyword>
<keyword id="KW-0520">NAD</keyword>
<keyword id="KW-0521">NADP</keyword>
<keyword id="KW-0560">Oxidoreductase</keyword>
<keyword id="KW-1185">Reference proteome</keyword>
<gene>
    <name evidence="1" type="primary">dapB</name>
    <name type="ordered locus">Sden_0994</name>
</gene>